<gene>
    <name evidence="1" type="primary">dapA</name>
    <name type="ordered locus">Clos_1163</name>
</gene>
<protein>
    <recommendedName>
        <fullName evidence="1">4-hydroxy-tetrahydrodipicolinate synthase</fullName>
        <shortName evidence="1">HTPA synthase</shortName>
        <ecNumber evidence="1">4.3.3.7</ecNumber>
    </recommendedName>
</protein>
<sequence>MFKGAGVAIVTPFKEGKIDFAAFEKLIDFHLENNTQALIVLGTTGEASTQTMEEREALIRLAVQRVEGRIPVIVGTGSNCTDTALQYTRQAEDLGADGILVVTPYYNKCTQKGLIEHFTQIANATKLPVILYNVPSRTGVNILPETVATMSKVENVIGIKEAGGNTAQVLEIKRLVPEDFKIYSGNDDQIIPIYACGGHGVISVASNVIPKEIQEMCAAFMEGNVEKALEIQLLYKKFIDLLFCEVNPIPVKAAVSALGYIENELRLPLTPMEEVNRKKLMDEMKKQNII</sequence>
<comment type="function">
    <text evidence="1">Catalyzes the condensation of (S)-aspartate-beta-semialdehyde [(S)-ASA] and pyruvate to 4-hydroxy-tetrahydrodipicolinate (HTPA).</text>
</comment>
<comment type="catalytic activity">
    <reaction evidence="1">
        <text>L-aspartate 4-semialdehyde + pyruvate = (2S,4S)-4-hydroxy-2,3,4,5-tetrahydrodipicolinate + H2O + H(+)</text>
        <dbReference type="Rhea" id="RHEA:34171"/>
        <dbReference type="ChEBI" id="CHEBI:15361"/>
        <dbReference type="ChEBI" id="CHEBI:15377"/>
        <dbReference type="ChEBI" id="CHEBI:15378"/>
        <dbReference type="ChEBI" id="CHEBI:67139"/>
        <dbReference type="ChEBI" id="CHEBI:537519"/>
        <dbReference type="EC" id="4.3.3.7"/>
    </reaction>
</comment>
<comment type="pathway">
    <text evidence="1">Amino-acid biosynthesis; L-lysine biosynthesis via DAP pathway; (S)-tetrahydrodipicolinate from L-aspartate: step 3/4.</text>
</comment>
<comment type="subunit">
    <text evidence="1">Homotetramer; dimer of dimers.</text>
</comment>
<comment type="subcellular location">
    <subcellularLocation>
        <location evidence="1">Cytoplasm</location>
    </subcellularLocation>
</comment>
<comment type="similarity">
    <text evidence="1">Belongs to the DapA family.</text>
</comment>
<comment type="caution">
    <text evidence="2">Was originally thought to be a dihydrodipicolinate synthase (DHDPS), catalyzing the condensation of (S)-aspartate-beta-semialdehyde [(S)-ASA] and pyruvate to dihydrodipicolinate (DHDP). However, it was shown in E.coli that the product of the enzymatic reaction is not dihydrodipicolinate but in fact (4S)-4-hydroxy-2,3,4,5-tetrahydro-(2S)-dipicolinic acid (HTPA), and that the consecutive dehydration reaction leading to DHDP is not spontaneous but catalyzed by DapB.</text>
</comment>
<reference key="1">
    <citation type="submission" date="2007-10" db="EMBL/GenBank/DDBJ databases">
        <title>Complete genome of Alkaliphilus oremlandii OhILAs.</title>
        <authorList>
            <person name="Copeland A."/>
            <person name="Lucas S."/>
            <person name="Lapidus A."/>
            <person name="Barry K."/>
            <person name="Detter J.C."/>
            <person name="Glavina del Rio T."/>
            <person name="Hammon N."/>
            <person name="Israni S."/>
            <person name="Dalin E."/>
            <person name="Tice H."/>
            <person name="Pitluck S."/>
            <person name="Chain P."/>
            <person name="Malfatti S."/>
            <person name="Shin M."/>
            <person name="Vergez L."/>
            <person name="Schmutz J."/>
            <person name="Larimer F."/>
            <person name="Land M."/>
            <person name="Hauser L."/>
            <person name="Kyrpides N."/>
            <person name="Mikhailova N."/>
            <person name="Stolz J.F."/>
            <person name="Dawson A."/>
            <person name="Fisher E."/>
            <person name="Crable B."/>
            <person name="Perera E."/>
            <person name="Lisak J."/>
            <person name="Ranganathan M."/>
            <person name="Basu P."/>
            <person name="Richardson P."/>
        </authorList>
    </citation>
    <scope>NUCLEOTIDE SEQUENCE [LARGE SCALE GENOMIC DNA]</scope>
    <source>
        <strain>OhILAs</strain>
    </source>
</reference>
<evidence type="ECO:0000255" key="1">
    <source>
        <dbReference type="HAMAP-Rule" id="MF_00418"/>
    </source>
</evidence>
<evidence type="ECO:0000305" key="2"/>
<accession>A8MF40</accession>
<dbReference type="EC" id="4.3.3.7" evidence="1"/>
<dbReference type="EMBL" id="CP000853">
    <property type="protein sequence ID" value="ABW18709.1"/>
    <property type="molecule type" value="Genomic_DNA"/>
</dbReference>
<dbReference type="RefSeq" id="WP_012159021.1">
    <property type="nucleotide sequence ID" value="NC_009922.1"/>
</dbReference>
<dbReference type="SMR" id="A8MF40"/>
<dbReference type="STRING" id="350688.Clos_1163"/>
<dbReference type="KEGG" id="aoe:Clos_1163"/>
<dbReference type="eggNOG" id="COG0329">
    <property type="taxonomic scope" value="Bacteria"/>
</dbReference>
<dbReference type="HOGENOM" id="CLU_049343_7_0_9"/>
<dbReference type="OrthoDB" id="9782828at2"/>
<dbReference type="UniPathway" id="UPA00034">
    <property type="reaction ID" value="UER00017"/>
</dbReference>
<dbReference type="Proteomes" id="UP000000269">
    <property type="component" value="Chromosome"/>
</dbReference>
<dbReference type="GO" id="GO:0005829">
    <property type="term" value="C:cytosol"/>
    <property type="evidence" value="ECO:0007669"/>
    <property type="project" value="TreeGrafter"/>
</dbReference>
<dbReference type="GO" id="GO:0008840">
    <property type="term" value="F:4-hydroxy-tetrahydrodipicolinate synthase activity"/>
    <property type="evidence" value="ECO:0007669"/>
    <property type="project" value="UniProtKB-UniRule"/>
</dbReference>
<dbReference type="GO" id="GO:0019877">
    <property type="term" value="P:diaminopimelate biosynthetic process"/>
    <property type="evidence" value="ECO:0007669"/>
    <property type="project" value="UniProtKB-UniRule"/>
</dbReference>
<dbReference type="GO" id="GO:0009089">
    <property type="term" value="P:lysine biosynthetic process via diaminopimelate"/>
    <property type="evidence" value="ECO:0007669"/>
    <property type="project" value="UniProtKB-UniRule"/>
</dbReference>
<dbReference type="CDD" id="cd00950">
    <property type="entry name" value="DHDPS"/>
    <property type="match status" value="1"/>
</dbReference>
<dbReference type="Gene3D" id="3.20.20.70">
    <property type="entry name" value="Aldolase class I"/>
    <property type="match status" value="1"/>
</dbReference>
<dbReference type="HAMAP" id="MF_00418">
    <property type="entry name" value="DapA"/>
    <property type="match status" value="1"/>
</dbReference>
<dbReference type="InterPro" id="IPR013785">
    <property type="entry name" value="Aldolase_TIM"/>
</dbReference>
<dbReference type="InterPro" id="IPR005263">
    <property type="entry name" value="DapA"/>
</dbReference>
<dbReference type="InterPro" id="IPR002220">
    <property type="entry name" value="DapA-like"/>
</dbReference>
<dbReference type="InterPro" id="IPR020625">
    <property type="entry name" value="Schiff_base-form_aldolases_AS"/>
</dbReference>
<dbReference type="InterPro" id="IPR020624">
    <property type="entry name" value="Schiff_base-form_aldolases_CS"/>
</dbReference>
<dbReference type="NCBIfam" id="TIGR00674">
    <property type="entry name" value="dapA"/>
    <property type="match status" value="1"/>
</dbReference>
<dbReference type="PANTHER" id="PTHR12128:SF66">
    <property type="entry name" value="4-HYDROXY-2-OXOGLUTARATE ALDOLASE, MITOCHONDRIAL"/>
    <property type="match status" value="1"/>
</dbReference>
<dbReference type="PANTHER" id="PTHR12128">
    <property type="entry name" value="DIHYDRODIPICOLINATE SYNTHASE"/>
    <property type="match status" value="1"/>
</dbReference>
<dbReference type="Pfam" id="PF00701">
    <property type="entry name" value="DHDPS"/>
    <property type="match status" value="1"/>
</dbReference>
<dbReference type="PIRSF" id="PIRSF001365">
    <property type="entry name" value="DHDPS"/>
    <property type="match status" value="1"/>
</dbReference>
<dbReference type="PRINTS" id="PR00146">
    <property type="entry name" value="DHPICSNTHASE"/>
</dbReference>
<dbReference type="SMART" id="SM01130">
    <property type="entry name" value="DHDPS"/>
    <property type="match status" value="1"/>
</dbReference>
<dbReference type="SUPFAM" id="SSF51569">
    <property type="entry name" value="Aldolase"/>
    <property type="match status" value="1"/>
</dbReference>
<dbReference type="PROSITE" id="PS00665">
    <property type="entry name" value="DHDPS_1"/>
    <property type="match status" value="1"/>
</dbReference>
<dbReference type="PROSITE" id="PS00666">
    <property type="entry name" value="DHDPS_2"/>
    <property type="match status" value="1"/>
</dbReference>
<feature type="chain" id="PRO_1000080520" description="4-hydroxy-tetrahydrodipicolinate synthase">
    <location>
        <begin position="1"/>
        <end position="290"/>
    </location>
</feature>
<feature type="active site" description="Proton donor/acceptor" evidence="1">
    <location>
        <position position="132"/>
    </location>
</feature>
<feature type="active site" description="Schiff-base intermediate with substrate" evidence="1">
    <location>
        <position position="160"/>
    </location>
</feature>
<feature type="binding site" evidence="1">
    <location>
        <position position="44"/>
    </location>
    <ligand>
        <name>pyruvate</name>
        <dbReference type="ChEBI" id="CHEBI:15361"/>
    </ligand>
</feature>
<feature type="binding site" evidence="1">
    <location>
        <position position="202"/>
    </location>
    <ligand>
        <name>pyruvate</name>
        <dbReference type="ChEBI" id="CHEBI:15361"/>
    </ligand>
</feature>
<feature type="site" description="Part of a proton relay during catalysis" evidence="1">
    <location>
        <position position="43"/>
    </location>
</feature>
<feature type="site" description="Part of a proton relay during catalysis" evidence="1">
    <location>
        <position position="106"/>
    </location>
</feature>
<name>DAPA_ALKOO</name>
<proteinExistence type="inferred from homology"/>
<organism>
    <name type="scientific">Alkaliphilus oremlandii (strain OhILAs)</name>
    <name type="common">Clostridium oremlandii (strain OhILAs)</name>
    <dbReference type="NCBI Taxonomy" id="350688"/>
    <lineage>
        <taxon>Bacteria</taxon>
        <taxon>Bacillati</taxon>
        <taxon>Bacillota</taxon>
        <taxon>Clostridia</taxon>
        <taxon>Peptostreptococcales</taxon>
        <taxon>Natronincolaceae</taxon>
        <taxon>Alkaliphilus</taxon>
    </lineage>
</organism>
<keyword id="KW-0028">Amino-acid biosynthesis</keyword>
<keyword id="KW-0963">Cytoplasm</keyword>
<keyword id="KW-0220">Diaminopimelate biosynthesis</keyword>
<keyword id="KW-0456">Lyase</keyword>
<keyword id="KW-0457">Lysine biosynthesis</keyword>
<keyword id="KW-1185">Reference proteome</keyword>
<keyword id="KW-0704">Schiff base</keyword>